<comment type="function">
    <text evidence="1">Binds as a heterodimer with protein bS6 to the central domain of the 16S rRNA, where it helps stabilize the platform of the 30S subunit.</text>
</comment>
<comment type="subunit">
    <text evidence="1">Part of the 30S ribosomal subunit. Forms a tight heterodimer with protein bS6.</text>
</comment>
<comment type="similarity">
    <text evidence="1">Belongs to the bacterial ribosomal protein bS18 family.</text>
</comment>
<proteinExistence type="inferred from homology"/>
<protein>
    <recommendedName>
        <fullName evidence="1">Small ribosomal subunit protein bS18</fullName>
    </recommendedName>
    <alternativeName>
        <fullName evidence="2">30S ribosomal protein S18</fullName>
    </alternativeName>
</protein>
<reference key="1">
    <citation type="journal article" date="2008" name="PLoS ONE">
        <title>Genome biology of Actinobacillus pleuropneumoniae JL03, an isolate of serotype 3 prevalent in China.</title>
        <authorList>
            <person name="Xu Z."/>
            <person name="Zhou Y."/>
            <person name="Li L."/>
            <person name="Zhou R."/>
            <person name="Xiao S."/>
            <person name="Wan Y."/>
            <person name="Zhang S."/>
            <person name="Wang K."/>
            <person name="Li W."/>
            <person name="Li L."/>
            <person name="Jin H."/>
            <person name="Kang M."/>
            <person name="Dalai B."/>
            <person name="Li T."/>
            <person name="Liu L."/>
            <person name="Cheng Y."/>
            <person name="Zhang L."/>
            <person name="Xu T."/>
            <person name="Zheng H."/>
            <person name="Pu S."/>
            <person name="Wang B."/>
            <person name="Gu W."/>
            <person name="Zhang X.L."/>
            <person name="Zhu G.-F."/>
            <person name="Wang S."/>
            <person name="Zhao G.-P."/>
            <person name="Chen H."/>
        </authorList>
    </citation>
    <scope>NUCLEOTIDE SEQUENCE [LARGE SCALE GENOMIC DNA]</scope>
    <source>
        <strain>JL03</strain>
    </source>
</reference>
<evidence type="ECO:0000255" key="1">
    <source>
        <dbReference type="HAMAP-Rule" id="MF_00270"/>
    </source>
</evidence>
<evidence type="ECO:0000305" key="2"/>
<gene>
    <name evidence="1" type="primary">rpsR</name>
    <name type="ordered locus">APJL_1190</name>
</gene>
<organism>
    <name type="scientific">Actinobacillus pleuropneumoniae serotype 3 (strain JL03)</name>
    <dbReference type="NCBI Taxonomy" id="434271"/>
    <lineage>
        <taxon>Bacteria</taxon>
        <taxon>Pseudomonadati</taxon>
        <taxon>Pseudomonadota</taxon>
        <taxon>Gammaproteobacteria</taxon>
        <taxon>Pasteurellales</taxon>
        <taxon>Pasteurellaceae</taxon>
        <taxon>Actinobacillus</taxon>
    </lineage>
</organism>
<dbReference type="EMBL" id="CP000687">
    <property type="protein sequence ID" value="ABY69746.1"/>
    <property type="molecule type" value="Genomic_DNA"/>
</dbReference>
<dbReference type="RefSeq" id="WP_005598105.1">
    <property type="nucleotide sequence ID" value="NC_010278.1"/>
</dbReference>
<dbReference type="SMR" id="B0BQB1"/>
<dbReference type="GeneID" id="93219554"/>
<dbReference type="KEGG" id="apj:APJL_1190"/>
<dbReference type="HOGENOM" id="CLU_148710_2_2_6"/>
<dbReference type="Proteomes" id="UP000008547">
    <property type="component" value="Chromosome"/>
</dbReference>
<dbReference type="GO" id="GO:0022627">
    <property type="term" value="C:cytosolic small ribosomal subunit"/>
    <property type="evidence" value="ECO:0007669"/>
    <property type="project" value="TreeGrafter"/>
</dbReference>
<dbReference type="GO" id="GO:0070181">
    <property type="term" value="F:small ribosomal subunit rRNA binding"/>
    <property type="evidence" value="ECO:0007669"/>
    <property type="project" value="TreeGrafter"/>
</dbReference>
<dbReference type="GO" id="GO:0003735">
    <property type="term" value="F:structural constituent of ribosome"/>
    <property type="evidence" value="ECO:0007669"/>
    <property type="project" value="InterPro"/>
</dbReference>
<dbReference type="GO" id="GO:0006412">
    <property type="term" value="P:translation"/>
    <property type="evidence" value="ECO:0007669"/>
    <property type="project" value="UniProtKB-UniRule"/>
</dbReference>
<dbReference type="FunFam" id="4.10.640.10:FF:000001">
    <property type="entry name" value="30S ribosomal protein S18"/>
    <property type="match status" value="1"/>
</dbReference>
<dbReference type="Gene3D" id="4.10.640.10">
    <property type="entry name" value="Ribosomal protein S18"/>
    <property type="match status" value="1"/>
</dbReference>
<dbReference type="HAMAP" id="MF_00270">
    <property type="entry name" value="Ribosomal_bS18"/>
    <property type="match status" value="1"/>
</dbReference>
<dbReference type="InterPro" id="IPR001648">
    <property type="entry name" value="Ribosomal_bS18"/>
</dbReference>
<dbReference type="InterPro" id="IPR018275">
    <property type="entry name" value="Ribosomal_bS18_CS"/>
</dbReference>
<dbReference type="InterPro" id="IPR036870">
    <property type="entry name" value="Ribosomal_bS18_sf"/>
</dbReference>
<dbReference type="NCBIfam" id="TIGR00165">
    <property type="entry name" value="S18"/>
    <property type="match status" value="1"/>
</dbReference>
<dbReference type="PANTHER" id="PTHR13479">
    <property type="entry name" value="30S RIBOSOMAL PROTEIN S18"/>
    <property type="match status" value="1"/>
</dbReference>
<dbReference type="PANTHER" id="PTHR13479:SF40">
    <property type="entry name" value="SMALL RIBOSOMAL SUBUNIT PROTEIN BS18M"/>
    <property type="match status" value="1"/>
</dbReference>
<dbReference type="Pfam" id="PF01084">
    <property type="entry name" value="Ribosomal_S18"/>
    <property type="match status" value="1"/>
</dbReference>
<dbReference type="PRINTS" id="PR00974">
    <property type="entry name" value="RIBOSOMALS18"/>
</dbReference>
<dbReference type="SUPFAM" id="SSF46911">
    <property type="entry name" value="Ribosomal protein S18"/>
    <property type="match status" value="1"/>
</dbReference>
<dbReference type="PROSITE" id="PS00057">
    <property type="entry name" value="RIBOSOMAL_S18"/>
    <property type="match status" value="1"/>
</dbReference>
<sequence>MARYFRRRKFCRFTAENVVEIDYKDIATLKNYISESGKIVPSRITGTRAKYQRQLARAIKRARYLALLPYTDNHQ</sequence>
<feature type="chain" id="PRO_1000114393" description="Small ribosomal subunit protein bS18">
    <location>
        <begin position="1"/>
        <end position="75"/>
    </location>
</feature>
<name>RS18_ACTPJ</name>
<accession>B0BQB1</accession>
<keyword id="KW-0687">Ribonucleoprotein</keyword>
<keyword id="KW-0689">Ribosomal protein</keyword>
<keyword id="KW-0694">RNA-binding</keyword>
<keyword id="KW-0699">rRNA-binding</keyword>